<evidence type="ECO:0000255" key="1"/>
<evidence type="ECO:0000256" key="2">
    <source>
        <dbReference type="SAM" id="MobiDB-lite"/>
    </source>
</evidence>
<evidence type="ECO:0000269" key="3">
    <source>
    </source>
</evidence>
<evidence type="ECO:0000303" key="4">
    <source>
    </source>
</evidence>
<evidence type="ECO:0000305" key="5"/>
<proteinExistence type="evidence at protein level"/>
<sequence length="349" mass="38449">MHQSLTQQRSSDMSLPDSMGAFNRRKRNSIYVTVTLLIVSVLILTVGLAATTRTQNVTVGGYYPGVILGFGSFLGIIGSNLIENKRQMLVASIVFISFGVIAAFCCAIVDGVFAARHIDLKPLYANRCHYVPKTSQKEAEEVISSSTKNSPSTRVMRNLTQAAREVNCPHLSREFCTPRIRGNTCFCCDLYNCGNRVEITGGYYEYIDVSSCQDIIHLYHLLWSATILNIVGLFLGIITAAVLGGFKDMNPTLPALNCSVENTHPTVSYYAHPQVASYNTYYHSPPHLPPYSAYDFQHSGVFPSSPPSGLSDEPQSASPSPSYMWSSSAPPRYSPPYYPPFEKPPPYSP</sequence>
<gene>
    <name type="primary">TMEM255A</name>
    <name type="synonym">FAM70A</name>
</gene>
<organism>
    <name type="scientific">Homo sapiens</name>
    <name type="common">Human</name>
    <dbReference type="NCBI Taxonomy" id="9606"/>
    <lineage>
        <taxon>Eukaryota</taxon>
        <taxon>Metazoa</taxon>
        <taxon>Chordata</taxon>
        <taxon>Craniata</taxon>
        <taxon>Vertebrata</taxon>
        <taxon>Euteleostomi</taxon>
        <taxon>Mammalia</taxon>
        <taxon>Eutheria</taxon>
        <taxon>Euarchontoglires</taxon>
        <taxon>Primates</taxon>
        <taxon>Haplorrhini</taxon>
        <taxon>Catarrhini</taxon>
        <taxon>Hominidae</taxon>
        <taxon>Homo</taxon>
    </lineage>
</organism>
<comment type="subcellular location">
    <subcellularLocation>
        <location evidence="5">Membrane</location>
        <topology evidence="5">Multi-pass membrane protein</topology>
    </subcellularLocation>
</comment>
<comment type="alternative products">
    <event type="alternative splicing"/>
    <isoform>
        <id>Q5JRV8-1</id>
        <name>1</name>
        <sequence type="displayed"/>
    </isoform>
    <isoform>
        <id>Q5JRV8-2</id>
        <name>2</name>
        <sequence type="described" ref="VSP_021920 VSP_021921"/>
    </isoform>
    <isoform>
        <id>Q5JRV8-3</id>
        <name>3</name>
        <sequence type="described" ref="VSP_046825"/>
    </isoform>
    <isoform>
        <id>Q5JRV8-4</id>
        <name>4</name>
        <sequence type="described" ref="VSP_046826"/>
    </isoform>
</comment>
<comment type="similarity">
    <text evidence="5">Belongs to the TMEM255 family.</text>
</comment>
<feature type="chain" id="PRO_0000266037" description="Transmembrane protein 255A">
    <location>
        <begin position="1"/>
        <end position="349"/>
    </location>
</feature>
<feature type="transmembrane region" description="Helical" evidence="1">
    <location>
        <begin position="30"/>
        <end position="50"/>
    </location>
</feature>
<feature type="transmembrane region" description="Helical" evidence="1">
    <location>
        <begin position="57"/>
        <end position="77"/>
    </location>
</feature>
<feature type="transmembrane region" description="Helical" evidence="1">
    <location>
        <begin position="89"/>
        <end position="109"/>
    </location>
</feature>
<feature type="transmembrane region" description="Helical" evidence="1">
    <location>
        <begin position="226"/>
        <end position="246"/>
    </location>
</feature>
<feature type="region of interest" description="Disordered" evidence="2">
    <location>
        <begin position="303"/>
        <end position="329"/>
    </location>
</feature>
<feature type="compositionally biased region" description="Low complexity" evidence="2">
    <location>
        <begin position="316"/>
        <end position="329"/>
    </location>
</feature>
<feature type="splice variant" id="VSP_021920" description="In isoform 2." evidence="4">
    <location>
        <begin position="1"/>
        <end position="164"/>
    </location>
</feature>
<feature type="splice variant" id="VSP_046825" description="In isoform 3." evidence="4">
    <location>
        <begin position="141"/>
        <end position="164"/>
    </location>
</feature>
<feature type="splice variant" id="VSP_046826" description="In isoform 4." evidence="5">
    <location>
        <begin position="142"/>
        <end position="249"/>
    </location>
</feature>
<feature type="splice variant" id="VSP_021921" description="In isoform 2." evidence="4">
    <original>E</original>
    <variation>M</variation>
    <location>
        <position position="165"/>
    </location>
</feature>
<feature type="sequence variant" id="VAR_029637" description="In dbSNP:rs17854410." evidence="3">
    <original>P</original>
    <variation>Q</variation>
    <location>
        <position position="345"/>
    </location>
</feature>
<feature type="sequence conflict" description="In Ref. 1; BAG51698." evidence="5" ref="1">
    <original>P</original>
    <variation>S</variation>
    <location>
        <position position="319"/>
    </location>
</feature>
<keyword id="KW-0025">Alternative splicing</keyword>
<keyword id="KW-0472">Membrane</keyword>
<keyword id="KW-1267">Proteomics identification</keyword>
<keyword id="KW-1185">Reference proteome</keyword>
<keyword id="KW-0812">Transmembrane</keyword>
<keyword id="KW-1133">Transmembrane helix</keyword>
<accession>Q5JRV8</accession>
<accession>A8K0W9</accession>
<accession>B1APR4</accession>
<accession>B3KPI6</accession>
<accession>E9PAR3</accession>
<accession>Q86Y72</accession>
<accession>Q9NWN8</accession>
<dbReference type="EMBL" id="AK000723">
    <property type="protein sequence ID" value="BAA91341.1"/>
    <property type="molecule type" value="mRNA"/>
</dbReference>
<dbReference type="EMBL" id="AK289684">
    <property type="protein sequence ID" value="BAF82373.1"/>
    <property type="molecule type" value="mRNA"/>
</dbReference>
<dbReference type="EMBL" id="AK056403">
    <property type="protein sequence ID" value="BAG51698.1"/>
    <property type="molecule type" value="mRNA"/>
</dbReference>
<dbReference type="EMBL" id="AC002086">
    <property type="status" value="NOT_ANNOTATED_CDS"/>
    <property type="molecule type" value="Genomic_DNA"/>
</dbReference>
<dbReference type="EMBL" id="AL512286">
    <property type="status" value="NOT_ANNOTATED_CDS"/>
    <property type="molecule type" value="Genomic_DNA"/>
</dbReference>
<dbReference type="EMBL" id="BC047054">
    <property type="protein sequence ID" value="AAH47054.1"/>
    <property type="molecule type" value="mRNA"/>
</dbReference>
<dbReference type="CCDS" id="CCDS14597.1">
    <molecule id="Q5JRV8-1"/>
</dbReference>
<dbReference type="CCDS" id="CCDS43986.1">
    <molecule id="Q5JRV8-3"/>
</dbReference>
<dbReference type="CCDS" id="CCDS48157.1">
    <molecule id="Q5JRV8-4"/>
</dbReference>
<dbReference type="RefSeq" id="NP_001098014.1">
    <molecule id="Q5JRV8-3"/>
    <property type="nucleotide sequence ID" value="NM_001104544.3"/>
</dbReference>
<dbReference type="RefSeq" id="NP_001098015.1">
    <molecule id="Q5JRV8-4"/>
    <property type="nucleotide sequence ID" value="NM_001104545.2"/>
</dbReference>
<dbReference type="RefSeq" id="NP_060408.3">
    <molecule id="Q5JRV8-1"/>
    <property type="nucleotide sequence ID" value="NM_017938.3"/>
</dbReference>
<dbReference type="BioGRID" id="120356">
    <property type="interactions" value="34"/>
</dbReference>
<dbReference type="FunCoup" id="Q5JRV8">
    <property type="interactions" value="19"/>
</dbReference>
<dbReference type="IntAct" id="Q5JRV8">
    <property type="interactions" value="12"/>
</dbReference>
<dbReference type="STRING" id="9606.ENSP00000310110"/>
<dbReference type="TCDB" id="9.B.200.1.1">
    <property type="family name" value="the 4 tms tmem255 or pfam fam70 (tmem255) family"/>
</dbReference>
<dbReference type="GlyGen" id="Q5JRV8">
    <property type="glycosylation" value="1 site"/>
</dbReference>
<dbReference type="iPTMnet" id="Q5JRV8"/>
<dbReference type="PhosphoSitePlus" id="Q5JRV8"/>
<dbReference type="BioMuta" id="TMEM255A"/>
<dbReference type="DMDM" id="74741910"/>
<dbReference type="MassIVE" id="Q5JRV8"/>
<dbReference type="PaxDb" id="9606-ENSP00000310110"/>
<dbReference type="PeptideAtlas" id="Q5JRV8"/>
<dbReference type="ProteomicsDB" id="3308"/>
<dbReference type="ProteomicsDB" id="63117">
    <molecule id="Q5JRV8-1"/>
</dbReference>
<dbReference type="Antibodypedia" id="29876">
    <property type="antibodies" value="85 antibodies from 17 providers"/>
</dbReference>
<dbReference type="DNASU" id="55026"/>
<dbReference type="Ensembl" id="ENST00000309720.9">
    <molecule id="Q5JRV8-1"/>
    <property type="protein sequence ID" value="ENSP00000310110.5"/>
    <property type="gene ID" value="ENSG00000125355.16"/>
</dbReference>
<dbReference type="Ensembl" id="ENST00000371352.5">
    <molecule id="Q5JRV8-2"/>
    <property type="protein sequence ID" value="ENSP00000360403.1"/>
    <property type="gene ID" value="ENSG00000125355.16"/>
</dbReference>
<dbReference type="Ensembl" id="ENST00000371369.9">
    <molecule id="Q5JRV8-3"/>
    <property type="protein sequence ID" value="ENSP00000360420.4"/>
    <property type="gene ID" value="ENSG00000125355.16"/>
</dbReference>
<dbReference type="Ensembl" id="ENST00000440464.5">
    <molecule id="Q5JRV8-4"/>
    <property type="protein sequence ID" value="ENSP00000405781.1"/>
    <property type="gene ID" value="ENSG00000125355.16"/>
</dbReference>
<dbReference type="GeneID" id="55026"/>
<dbReference type="KEGG" id="hsa:55026"/>
<dbReference type="MANE-Select" id="ENST00000371369.9">
    <molecule id="Q5JRV8-3"/>
    <property type="protein sequence ID" value="ENSP00000360420.4"/>
    <property type="RefSeq nucleotide sequence ID" value="NM_001104544.3"/>
    <property type="RefSeq protein sequence ID" value="NP_001098014.1"/>
</dbReference>
<dbReference type="UCSC" id="uc004eso.5">
    <molecule id="Q5JRV8-1"/>
    <property type="organism name" value="human"/>
</dbReference>
<dbReference type="AGR" id="HGNC:26086"/>
<dbReference type="CTD" id="55026"/>
<dbReference type="DisGeNET" id="55026"/>
<dbReference type="GeneCards" id="TMEM255A"/>
<dbReference type="HGNC" id="HGNC:26086">
    <property type="gene designation" value="TMEM255A"/>
</dbReference>
<dbReference type="HPA" id="ENSG00000125355">
    <property type="expression patterns" value="Tissue enhanced (brain, ovary)"/>
</dbReference>
<dbReference type="neXtProt" id="NX_Q5JRV8"/>
<dbReference type="OpenTargets" id="ENSG00000125355"/>
<dbReference type="PharmGKB" id="PA142671885"/>
<dbReference type="VEuPathDB" id="HostDB:ENSG00000125355"/>
<dbReference type="eggNOG" id="ENOG502QVX8">
    <property type="taxonomic scope" value="Eukaryota"/>
</dbReference>
<dbReference type="GeneTree" id="ENSGT00940000160471"/>
<dbReference type="HOGENOM" id="CLU_068698_1_0_1"/>
<dbReference type="InParanoid" id="Q5JRV8"/>
<dbReference type="OMA" id="MWASNAP"/>
<dbReference type="OrthoDB" id="10034004at2759"/>
<dbReference type="PAN-GO" id="Q5JRV8">
    <property type="GO annotations" value="0 GO annotations based on evolutionary models"/>
</dbReference>
<dbReference type="PhylomeDB" id="Q5JRV8"/>
<dbReference type="TreeFam" id="TF331034"/>
<dbReference type="PathwayCommons" id="Q5JRV8"/>
<dbReference type="SignaLink" id="Q5JRV8"/>
<dbReference type="BioGRID-ORCS" id="55026">
    <property type="hits" value="10 hits in 767 CRISPR screens"/>
</dbReference>
<dbReference type="ChiTaRS" id="TMEM255A">
    <property type="organism name" value="human"/>
</dbReference>
<dbReference type="GenomeRNAi" id="55026"/>
<dbReference type="Pharos" id="Q5JRV8">
    <property type="development level" value="Tdark"/>
</dbReference>
<dbReference type="PRO" id="PR:Q5JRV8"/>
<dbReference type="Proteomes" id="UP000005640">
    <property type="component" value="Chromosome X"/>
</dbReference>
<dbReference type="RNAct" id="Q5JRV8">
    <property type="molecule type" value="protein"/>
</dbReference>
<dbReference type="Bgee" id="ENSG00000125355">
    <property type="expression patterns" value="Expressed in substantia nigra pars reticulata and 139 other cell types or tissues"/>
</dbReference>
<dbReference type="ExpressionAtlas" id="Q5JRV8">
    <property type="expression patterns" value="baseline and differential"/>
</dbReference>
<dbReference type="GO" id="GO:0016020">
    <property type="term" value="C:membrane"/>
    <property type="evidence" value="ECO:0007669"/>
    <property type="project" value="UniProtKB-SubCell"/>
</dbReference>
<dbReference type="GO" id="GO:0009617">
    <property type="term" value="P:response to bacterium"/>
    <property type="evidence" value="ECO:0007669"/>
    <property type="project" value="Ensembl"/>
</dbReference>
<dbReference type="InterPro" id="IPR028014">
    <property type="entry name" value="TMEM255"/>
</dbReference>
<dbReference type="PANTHER" id="PTHR33721:SF1">
    <property type="entry name" value="TRANSMEMBRANE PROTEIN 255A"/>
    <property type="match status" value="1"/>
</dbReference>
<dbReference type="PANTHER" id="PTHR33721">
    <property type="entry name" value="TRANSMEMBRANE PROTEIN 255B-LIKE"/>
    <property type="match status" value="1"/>
</dbReference>
<dbReference type="Pfam" id="PF14967">
    <property type="entry name" value="FAM70"/>
    <property type="match status" value="1"/>
</dbReference>
<reference key="1">
    <citation type="journal article" date="2004" name="Nat. Genet.">
        <title>Complete sequencing and characterization of 21,243 full-length human cDNAs.</title>
        <authorList>
            <person name="Ota T."/>
            <person name="Suzuki Y."/>
            <person name="Nishikawa T."/>
            <person name="Otsuki T."/>
            <person name="Sugiyama T."/>
            <person name="Irie R."/>
            <person name="Wakamatsu A."/>
            <person name="Hayashi K."/>
            <person name="Sato H."/>
            <person name="Nagai K."/>
            <person name="Kimura K."/>
            <person name="Makita H."/>
            <person name="Sekine M."/>
            <person name="Obayashi M."/>
            <person name="Nishi T."/>
            <person name="Shibahara T."/>
            <person name="Tanaka T."/>
            <person name="Ishii S."/>
            <person name="Yamamoto J."/>
            <person name="Saito K."/>
            <person name="Kawai Y."/>
            <person name="Isono Y."/>
            <person name="Nakamura Y."/>
            <person name="Nagahari K."/>
            <person name="Murakami K."/>
            <person name="Yasuda T."/>
            <person name="Iwayanagi T."/>
            <person name="Wagatsuma M."/>
            <person name="Shiratori A."/>
            <person name="Sudo H."/>
            <person name="Hosoiri T."/>
            <person name="Kaku Y."/>
            <person name="Kodaira H."/>
            <person name="Kondo H."/>
            <person name="Sugawara M."/>
            <person name="Takahashi M."/>
            <person name="Kanda K."/>
            <person name="Yokoi T."/>
            <person name="Furuya T."/>
            <person name="Kikkawa E."/>
            <person name="Omura Y."/>
            <person name="Abe K."/>
            <person name="Kamihara K."/>
            <person name="Katsuta N."/>
            <person name="Sato K."/>
            <person name="Tanikawa M."/>
            <person name="Yamazaki M."/>
            <person name="Ninomiya K."/>
            <person name="Ishibashi T."/>
            <person name="Yamashita H."/>
            <person name="Murakawa K."/>
            <person name="Fujimori K."/>
            <person name="Tanai H."/>
            <person name="Kimata M."/>
            <person name="Watanabe M."/>
            <person name="Hiraoka S."/>
            <person name="Chiba Y."/>
            <person name="Ishida S."/>
            <person name="Ono Y."/>
            <person name="Takiguchi S."/>
            <person name="Watanabe S."/>
            <person name="Yosida M."/>
            <person name="Hotuta T."/>
            <person name="Kusano J."/>
            <person name="Kanehori K."/>
            <person name="Takahashi-Fujii A."/>
            <person name="Hara H."/>
            <person name="Tanase T.-O."/>
            <person name="Nomura Y."/>
            <person name="Togiya S."/>
            <person name="Komai F."/>
            <person name="Hara R."/>
            <person name="Takeuchi K."/>
            <person name="Arita M."/>
            <person name="Imose N."/>
            <person name="Musashino K."/>
            <person name="Yuuki H."/>
            <person name="Oshima A."/>
            <person name="Sasaki N."/>
            <person name="Aotsuka S."/>
            <person name="Yoshikawa Y."/>
            <person name="Matsunawa H."/>
            <person name="Ichihara T."/>
            <person name="Shiohata N."/>
            <person name="Sano S."/>
            <person name="Moriya S."/>
            <person name="Momiyama H."/>
            <person name="Satoh N."/>
            <person name="Takami S."/>
            <person name="Terashima Y."/>
            <person name="Suzuki O."/>
            <person name="Nakagawa S."/>
            <person name="Senoh A."/>
            <person name="Mizoguchi H."/>
            <person name="Goto Y."/>
            <person name="Shimizu F."/>
            <person name="Wakebe H."/>
            <person name="Hishigaki H."/>
            <person name="Watanabe T."/>
            <person name="Sugiyama A."/>
            <person name="Takemoto M."/>
            <person name="Kawakami B."/>
            <person name="Yamazaki M."/>
            <person name="Watanabe K."/>
            <person name="Kumagai A."/>
            <person name="Itakura S."/>
            <person name="Fukuzumi Y."/>
            <person name="Fujimori Y."/>
            <person name="Komiyama M."/>
            <person name="Tashiro H."/>
            <person name="Tanigami A."/>
            <person name="Fujiwara T."/>
            <person name="Ono T."/>
            <person name="Yamada K."/>
            <person name="Fujii Y."/>
            <person name="Ozaki K."/>
            <person name="Hirao M."/>
            <person name="Ohmori Y."/>
            <person name="Kawabata A."/>
            <person name="Hikiji T."/>
            <person name="Kobatake N."/>
            <person name="Inagaki H."/>
            <person name="Ikema Y."/>
            <person name="Okamoto S."/>
            <person name="Okitani R."/>
            <person name="Kawakami T."/>
            <person name="Noguchi S."/>
            <person name="Itoh T."/>
            <person name="Shigeta K."/>
            <person name="Senba T."/>
            <person name="Matsumura K."/>
            <person name="Nakajima Y."/>
            <person name="Mizuno T."/>
            <person name="Morinaga M."/>
            <person name="Sasaki M."/>
            <person name="Togashi T."/>
            <person name="Oyama M."/>
            <person name="Hata H."/>
            <person name="Watanabe M."/>
            <person name="Komatsu T."/>
            <person name="Mizushima-Sugano J."/>
            <person name="Satoh T."/>
            <person name="Shirai Y."/>
            <person name="Takahashi Y."/>
            <person name="Nakagawa K."/>
            <person name="Okumura K."/>
            <person name="Nagase T."/>
            <person name="Nomura N."/>
            <person name="Kikuchi H."/>
            <person name="Masuho Y."/>
            <person name="Yamashita R."/>
            <person name="Nakai K."/>
            <person name="Yada T."/>
            <person name="Nakamura Y."/>
            <person name="Ohara O."/>
            <person name="Isogai T."/>
            <person name="Sugano S."/>
        </authorList>
    </citation>
    <scope>NUCLEOTIDE SEQUENCE [LARGE SCALE MRNA] (ISOFORMS 1; 2 AND 3)</scope>
    <source>
        <tissue>Amygdala</tissue>
    </source>
</reference>
<reference key="2">
    <citation type="journal article" date="2005" name="Nature">
        <title>The DNA sequence of the human X chromosome.</title>
        <authorList>
            <person name="Ross M.T."/>
            <person name="Grafham D.V."/>
            <person name="Coffey A.J."/>
            <person name="Scherer S."/>
            <person name="McLay K."/>
            <person name="Muzny D."/>
            <person name="Platzer M."/>
            <person name="Howell G.R."/>
            <person name="Burrows C."/>
            <person name="Bird C.P."/>
            <person name="Frankish A."/>
            <person name="Lovell F.L."/>
            <person name="Howe K.L."/>
            <person name="Ashurst J.L."/>
            <person name="Fulton R.S."/>
            <person name="Sudbrak R."/>
            <person name="Wen G."/>
            <person name="Jones M.C."/>
            <person name="Hurles M.E."/>
            <person name="Andrews T.D."/>
            <person name="Scott C.E."/>
            <person name="Searle S."/>
            <person name="Ramser J."/>
            <person name="Whittaker A."/>
            <person name="Deadman R."/>
            <person name="Carter N.P."/>
            <person name="Hunt S.E."/>
            <person name="Chen R."/>
            <person name="Cree A."/>
            <person name="Gunaratne P."/>
            <person name="Havlak P."/>
            <person name="Hodgson A."/>
            <person name="Metzker M.L."/>
            <person name="Richards S."/>
            <person name="Scott G."/>
            <person name="Steffen D."/>
            <person name="Sodergren E."/>
            <person name="Wheeler D.A."/>
            <person name="Worley K.C."/>
            <person name="Ainscough R."/>
            <person name="Ambrose K.D."/>
            <person name="Ansari-Lari M.A."/>
            <person name="Aradhya S."/>
            <person name="Ashwell R.I."/>
            <person name="Babbage A.K."/>
            <person name="Bagguley C.L."/>
            <person name="Ballabio A."/>
            <person name="Banerjee R."/>
            <person name="Barker G.E."/>
            <person name="Barlow K.F."/>
            <person name="Barrett I.P."/>
            <person name="Bates K.N."/>
            <person name="Beare D.M."/>
            <person name="Beasley H."/>
            <person name="Beasley O."/>
            <person name="Beck A."/>
            <person name="Bethel G."/>
            <person name="Blechschmidt K."/>
            <person name="Brady N."/>
            <person name="Bray-Allen S."/>
            <person name="Bridgeman A.M."/>
            <person name="Brown A.J."/>
            <person name="Brown M.J."/>
            <person name="Bonnin D."/>
            <person name="Bruford E.A."/>
            <person name="Buhay C."/>
            <person name="Burch P."/>
            <person name="Burford D."/>
            <person name="Burgess J."/>
            <person name="Burrill W."/>
            <person name="Burton J."/>
            <person name="Bye J.M."/>
            <person name="Carder C."/>
            <person name="Carrel L."/>
            <person name="Chako J."/>
            <person name="Chapman J.C."/>
            <person name="Chavez D."/>
            <person name="Chen E."/>
            <person name="Chen G."/>
            <person name="Chen Y."/>
            <person name="Chen Z."/>
            <person name="Chinault C."/>
            <person name="Ciccodicola A."/>
            <person name="Clark S.Y."/>
            <person name="Clarke G."/>
            <person name="Clee C.M."/>
            <person name="Clegg S."/>
            <person name="Clerc-Blankenburg K."/>
            <person name="Clifford K."/>
            <person name="Cobley V."/>
            <person name="Cole C.G."/>
            <person name="Conquer J.S."/>
            <person name="Corby N."/>
            <person name="Connor R.E."/>
            <person name="David R."/>
            <person name="Davies J."/>
            <person name="Davis C."/>
            <person name="Davis J."/>
            <person name="Delgado O."/>
            <person name="Deshazo D."/>
            <person name="Dhami P."/>
            <person name="Ding Y."/>
            <person name="Dinh H."/>
            <person name="Dodsworth S."/>
            <person name="Draper H."/>
            <person name="Dugan-Rocha S."/>
            <person name="Dunham A."/>
            <person name="Dunn M."/>
            <person name="Durbin K.J."/>
            <person name="Dutta I."/>
            <person name="Eades T."/>
            <person name="Ellwood M."/>
            <person name="Emery-Cohen A."/>
            <person name="Errington H."/>
            <person name="Evans K.L."/>
            <person name="Faulkner L."/>
            <person name="Francis F."/>
            <person name="Frankland J."/>
            <person name="Fraser A.E."/>
            <person name="Galgoczy P."/>
            <person name="Gilbert J."/>
            <person name="Gill R."/>
            <person name="Gloeckner G."/>
            <person name="Gregory S.G."/>
            <person name="Gribble S."/>
            <person name="Griffiths C."/>
            <person name="Grocock R."/>
            <person name="Gu Y."/>
            <person name="Gwilliam R."/>
            <person name="Hamilton C."/>
            <person name="Hart E.A."/>
            <person name="Hawes A."/>
            <person name="Heath P.D."/>
            <person name="Heitmann K."/>
            <person name="Hennig S."/>
            <person name="Hernandez J."/>
            <person name="Hinzmann B."/>
            <person name="Ho S."/>
            <person name="Hoffs M."/>
            <person name="Howden P.J."/>
            <person name="Huckle E.J."/>
            <person name="Hume J."/>
            <person name="Hunt P.J."/>
            <person name="Hunt A.R."/>
            <person name="Isherwood J."/>
            <person name="Jacob L."/>
            <person name="Johnson D."/>
            <person name="Jones S."/>
            <person name="de Jong P.J."/>
            <person name="Joseph S.S."/>
            <person name="Keenan S."/>
            <person name="Kelly S."/>
            <person name="Kershaw J.K."/>
            <person name="Khan Z."/>
            <person name="Kioschis P."/>
            <person name="Klages S."/>
            <person name="Knights A.J."/>
            <person name="Kosiura A."/>
            <person name="Kovar-Smith C."/>
            <person name="Laird G.K."/>
            <person name="Langford C."/>
            <person name="Lawlor S."/>
            <person name="Leversha M."/>
            <person name="Lewis L."/>
            <person name="Liu W."/>
            <person name="Lloyd C."/>
            <person name="Lloyd D.M."/>
            <person name="Loulseged H."/>
            <person name="Loveland J.E."/>
            <person name="Lovell J.D."/>
            <person name="Lozado R."/>
            <person name="Lu J."/>
            <person name="Lyne R."/>
            <person name="Ma J."/>
            <person name="Maheshwari M."/>
            <person name="Matthews L.H."/>
            <person name="McDowall J."/>
            <person name="McLaren S."/>
            <person name="McMurray A."/>
            <person name="Meidl P."/>
            <person name="Meitinger T."/>
            <person name="Milne S."/>
            <person name="Miner G."/>
            <person name="Mistry S.L."/>
            <person name="Morgan M."/>
            <person name="Morris S."/>
            <person name="Mueller I."/>
            <person name="Mullikin J.C."/>
            <person name="Nguyen N."/>
            <person name="Nordsiek G."/>
            <person name="Nyakatura G."/>
            <person name="O'dell C.N."/>
            <person name="Okwuonu G."/>
            <person name="Palmer S."/>
            <person name="Pandian R."/>
            <person name="Parker D."/>
            <person name="Parrish J."/>
            <person name="Pasternak S."/>
            <person name="Patel D."/>
            <person name="Pearce A.V."/>
            <person name="Pearson D.M."/>
            <person name="Pelan S.E."/>
            <person name="Perez L."/>
            <person name="Porter K.M."/>
            <person name="Ramsey Y."/>
            <person name="Reichwald K."/>
            <person name="Rhodes S."/>
            <person name="Ridler K.A."/>
            <person name="Schlessinger D."/>
            <person name="Schueler M.G."/>
            <person name="Sehra H.K."/>
            <person name="Shaw-Smith C."/>
            <person name="Shen H."/>
            <person name="Sheridan E.M."/>
            <person name="Shownkeen R."/>
            <person name="Skuce C.D."/>
            <person name="Smith M.L."/>
            <person name="Sotheran E.C."/>
            <person name="Steingruber H.E."/>
            <person name="Steward C.A."/>
            <person name="Storey R."/>
            <person name="Swann R.M."/>
            <person name="Swarbreck D."/>
            <person name="Tabor P.E."/>
            <person name="Taudien S."/>
            <person name="Taylor T."/>
            <person name="Teague B."/>
            <person name="Thomas K."/>
            <person name="Thorpe A."/>
            <person name="Timms K."/>
            <person name="Tracey A."/>
            <person name="Trevanion S."/>
            <person name="Tromans A.C."/>
            <person name="d'Urso M."/>
            <person name="Verduzco D."/>
            <person name="Villasana D."/>
            <person name="Waldron L."/>
            <person name="Wall M."/>
            <person name="Wang Q."/>
            <person name="Warren J."/>
            <person name="Warry G.L."/>
            <person name="Wei X."/>
            <person name="West A."/>
            <person name="Whitehead S.L."/>
            <person name="Whiteley M.N."/>
            <person name="Wilkinson J.E."/>
            <person name="Willey D.L."/>
            <person name="Williams G."/>
            <person name="Williams L."/>
            <person name="Williamson A."/>
            <person name="Williamson H."/>
            <person name="Wilming L."/>
            <person name="Woodmansey R.L."/>
            <person name="Wray P.W."/>
            <person name="Yen J."/>
            <person name="Zhang J."/>
            <person name="Zhou J."/>
            <person name="Zoghbi H."/>
            <person name="Zorilla S."/>
            <person name="Buck D."/>
            <person name="Reinhardt R."/>
            <person name="Poustka A."/>
            <person name="Rosenthal A."/>
            <person name="Lehrach H."/>
            <person name="Meindl A."/>
            <person name="Minx P.J."/>
            <person name="Hillier L.W."/>
            <person name="Willard H.F."/>
            <person name="Wilson R.K."/>
            <person name="Waterston R.H."/>
            <person name="Rice C.M."/>
            <person name="Vaudin M."/>
            <person name="Coulson A."/>
            <person name="Nelson D.L."/>
            <person name="Weinstock G."/>
            <person name="Sulston J.E."/>
            <person name="Durbin R.M."/>
            <person name="Hubbard T."/>
            <person name="Gibbs R.A."/>
            <person name="Beck S."/>
            <person name="Rogers J."/>
            <person name="Bentley D.R."/>
        </authorList>
    </citation>
    <scope>NUCLEOTIDE SEQUENCE [LARGE SCALE GENOMIC DNA]</scope>
</reference>
<reference key="3">
    <citation type="journal article" date="2004" name="Genome Res.">
        <title>The status, quality, and expansion of the NIH full-length cDNA project: the Mammalian Gene Collection (MGC).</title>
        <authorList>
            <consortium name="The MGC Project Team"/>
        </authorList>
    </citation>
    <scope>NUCLEOTIDE SEQUENCE [LARGE SCALE MRNA] (ISOFORM 1)</scope>
    <scope>VARIANT GLN-345</scope>
    <source>
        <tissue>Brain</tissue>
    </source>
</reference>
<name>T255A_HUMAN</name>
<protein>
    <recommendedName>
        <fullName>Transmembrane protein 255A</fullName>
    </recommendedName>
    <alternativeName>
        <fullName>Protein FAM70A</fullName>
    </alternativeName>
</protein>